<accession>C4L8E4</accession>
<protein>
    <recommendedName>
        <fullName evidence="1">Acyl carrier protein</fullName>
        <shortName evidence="1">ACP</shortName>
    </recommendedName>
</protein>
<dbReference type="EMBL" id="CP001616">
    <property type="protein sequence ID" value="ACQ93790.1"/>
    <property type="molecule type" value="Genomic_DNA"/>
</dbReference>
<dbReference type="RefSeq" id="WP_015879258.1">
    <property type="nucleotide sequence ID" value="NC_012691.1"/>
</dbReference>
<dbReference type="SMR" id="C4L8E4"/>
<dbReference type="STRING" id="595494.Tola_2191"/>
<dbReference type="KEGG" id="tau:Tola_2191"/>
<dbReference type="eggNOG" id="COG0236">
    <property type="taxonomic scope" value="Bacteria"/>
</dbReference>
<dbReference type="HOGENOM" id="CLU_108696_5_1_6"/>
<dbReference type="OrthoDB" id="9804551at2"/>
<dbReference type="UniPathway" id="UPA00094"/>
<dbReference type="Proteomes" id="UP000009073">
    <property type="component" value="Chromosome"/>
</dbReference>
<dbReference type="GO" id="GO:0005829">
    <property type="term" value="C:cytosol"/>
    <property type="evidence" value="ECO:0007669"/>
    <property type="project" value="TreeGrafter"/>
</dbReference>
<dbReference type="GO" id="GO:0016020">
    <property type="term" value="C:membrane"/>
    <property type="evidence" value="ECO:0007669"/>
    <property type="project" value="GOC"/>
</dbReference>
<dbReference type="GO" id="GO:0000035">
    <property type="term" value="F:acyl binding"/>
    <property type="evidence" value="ECO:0007669"/>
    <property type="project" value="TreeGrafter"/>
</dbReference>
<dbReference type="GO" id="GO:0000036">
    <property type="term" value="F:acyl carrier activity"/>
    <property type="evidence" value="ECO:0007669"/>
    <property type="project" value="UniProtKB-UniRule"/>
</dbReference>
<dbReference type="GO" id="GO:0009245">
    <property type="term" value="P:lipid A biosynthetic process"/>
    <property type="evidence" value="ECO:0007669"/>
    <property type="project" value="TreeGrafter"/>
</dbReference>
<dbReference type="FunFam" id="1.10.1200.10:FF:000001">
    <property type="entry name" value="Acyl carrier protein"/>
    <property type="match status" value="1"/>
</dbReference>
<dbReference type="Gene3D" id="1.10.1200.10">
    <property type="entry name" value="ACP-like"/>
    <property type="match status" value="1"/>
</dbReference>
<dbReference type="HAMAP" id="MF_01217">
    <property type="entry name" value="Acyl_carrier"/>
    <property type="match status" value="1"/>
</dbReference>
<dbReference type="InterPro" id="IPR003231">
    <property type="entry name" value="ACP"/>
</dbReference>
<dbReference type="InterPro" id="IPR036736">
    <property type="entry name" value="ACP-like_sf"/>
</dbReference>
<dbReference type="InterPro" id="IPR009081">
    <property type="entry name" value="PP-bd_ACP"/>
</dbReference>
<dbReference type="InterPro" id="IPR006162">
    <property type="entry name" value="Ppantetheine_attach_site"/>
</dbReference>
<dbReference type="NCBIfam" id="TIGR00517">
    <property type="entry name" value="acyl_carrier"/>
    <property type="match status" value="1"/>
</dbReference>
<dbReference type="NCBIfam" id="NF002148">
    <property type="entry name" value="PRK00982.1-2"/>
    <property type="match status" value="1"/>
</dbReference>
<dbReference type="NCBIfam" id="NF002149">
    <property type="entry name" value="PRK00982.1-3"/>
    <property type="match status" value="1"/>
</dbReference>
<dbReference type="NCBIfam" id="NF002150">
    <property type="entry name" value="PRK00982.1-4"/>
    <property type="match status" value="1"/>
</dbReference>
<dbReference type="NCBIfam" id="NF002151">
    <property type="entry name" value="PRK00982.1-5"/>
    <property type="match status" value="1"/>
</dbReference>
<dbReference type="PANTHER" id="PTHR20863">
    <property type="entry name" value="ACYL CARRIER PROTEIN"/>
    <property type="match status" value="1"/>
</dbReference>
<dbReference type="PANTHER" id="PTHR20863:SF76">
    <property type="entry name" value="CARRIER DOMAIN-CONTAINING PROTEIN"/>
    <property type="match status" value="1"/>
</dbReference>
<dbReference type="Pfam" id="PF00550">
    <property type="entry name" value="PP-binding"/>
    <property type="match status" value="1"/>
</dbReference>
<dbReference type="SUPFAM" id="SSF47336">
    <property type="entry name" value="ACP-like"/>
    <property type="match status" value="1"/>
</dbReference>
<dbReference type="PROSITE" id="PS50075">
    <property type="entry name" value="CARRIER"/>
    <property type="match status" value="1"/>
</dbReference>
<dbReference type="PROSITE" id="PS00012">
    <property type="entry name" value="PHOSPHOPANTETHEINE"/>
    <property type="match status" value="1"/>
</dbReference>
<gene>
    <name evidence="1" type="primary">acpP</name>
    <name type="ordered locus">Tola_2191</name>
</gene>
<reference key="1">
    <citation type="submission" date="2009-05" db="EMBL/GenBank/DDBJ databases">
        <title>Complete sequence of Tolumonas auensis DSM 9187.</title>
        <authorList>
            <consortium name="US DOE Joint Genome Institute"/>
            <person name="Lucas S."/>
            <person name="Copeland A."/>
            <person name="Lapidus A."/>
            <person name="Glavina del Rio T."/>
            <person name="Tice H."/>
            <person name="Bruce D."/>
            <person name="Goodwin L."/>
            <person name="Pitluck S."/>
            <person name="Chertkov O."/>
            <person name="Brettin T."/>
            <person name="Detter J.C."/>
            <person name="Han C."/>
            <person name="Larimer F."/>
            <person name="Land M."/>
            <person name="Hauser L."/>
            <person name="Kyrpides N."/>
            <person name="Mikhailova N."/>
            <person name="Spring S."/>
            <person name="Beller H."/>
        </authorList>
    </citation>
    <scope>NUCLEOTIDE SEQUENCE [LARGE SCALE GENOMIC DNA]</scope>
    <source>
        <strain>DSM 9187 / NBRC 110442 / TA 4</strain>
    </source>
</reference>
<sequence length="78" mass="8699">MSTIEERVKKIIIEQLGVKEDDVKSAASFVDDLGADSLDTVELVMALEEEFDTEIPDEEAEKITTVQAAIDYILSHQE</sequence>
<keyword id="KW-0963">Cytoplasm</keyword>
<keyword id="KW-0275">Fatty acid biosynthesis</keyword>
<keyword id="KW-0276">Fatty acid metabolism</keyword>
<keyword id="KW-0444">Lipid biosynthesis</keyword>
<keyword id="KW-0443">Lipid metabolism</keyword>
<keyword id="KW-0596">Phosphopantetheine</keyword>
<keyword id="KW-0597">Phosphoprotein</keyword>
<keyword id="KW-1185">Reference proteome</keyword>
<name>ACP_TOLAT</name>
<comment type="function">
    <text evidence="1">Carrier of the growing fatty acid chain in fatty acid biosynthesis.</text>
</comment>
<comment type="pathway">
    <text evidence="1">Lipid metabolism; fatty acid biosynthesis.</text>
</comment>
<comment type="subcellular location">
    <subcellularLocation>
        <location evidence="1">Cytoplasm</location>
    </subcellularLocation>
</comment>
<comment type="PTM">
    <text evidence="1">4'-phosphopantetheine is transferred from CoA to a specific serine of apo-ACP by AcpS. This modification is essential for activity because fatty acids are bound in thioester linkage to the sulfhydryl of the prosthetic group.</text>
</comment>
<comment type="similarity">
    <text evidence="1">Belongs to the acyl carrier protein (ACP) family.</text>
</comment>
<organism>
    <name type="scientific">Tolumonas auensis (strain DSM 9187 / NBRC 110442 / TA 4)</name>
    <dbReference type="NCBI Taxonomy" id="595494"/>
    <lineage>
        <taxon>Bacteria</taxon>
        <taxon>Pseudomonadati</taxon>
        <taxon>Pseudomonadota</taxon>
        <taxon>Gammaproteobacteria</taxon>
        <taxon>Aeromonadales</taxon>
        <taxon>Aeromonadaceae</taxon>
        <taxon>Tolumonas</taxon>
    </lineage>
</organism>
<feature type="chain" id="PRO_1000213920" description="Acyl carrier protein">
    <location>
        <begin position="1"/>
        <end position="78"/>
    </location>
</feature>
<feature type="domain" description="Carrier" evidence="2">
    <location>
        <begin position="2"/>
        <end position="77"/>
    </location>
</feature>
<feature type="modified residue" description="O-(pantetheine 4'-phosphoryl)serine" evidence="2">
    <location>
        <position position="37"/>
    </location>
</feature>
<evidence type="ECO:0000255" key="1">
    <source>
        <dbReference type="HAMAP-Rule" id="MF_01217"/>
    </source>
</evidence>
<evidence type="ECO:0000255" key="2">
    <source>
        <dbReference type="PROSITE-ProRule" id="PRU00258"/>
    </source>
</evidence>
<proteinExistence type="inferred from homology"/>